<accession>Q56XP9</accession>
<accession>Q9SV65</accession>
<organism>
    <name type="scientific">Arabidopsis thaliana</name>
    <name type="common">Mouse-ear cress</name>
    <dbReference type="NCBI Taxonomy" id="3702"/>
    <lineage>
        <taxon>Eukaryota</taxon>
        <taxon>Viridiplantae</taxon>
        <taxon>Streptophyta</taxon>
        <taxon>Embryophyta</taxon>
        <taxon>Tracheophyta</taxon>
        <taxon>Spermatophyta</taxon>
        <taxon>Magnoliopsida</taxon>
        <taxon>eudicotyledons</taxon>
        <taxon>Gunneridae</taxon>
        <taxon>Pentapetalae</taxon>
        <taxon>rosids</taxon>
        <taxon>malvids</taxon>
        <taxon>Brassicales</taxon>
        <taxon>Brassicaceae</taxon>
        <taxon>Camelineae</taxon>
        <taxon>Arabidopsis</taxon>
    </lineage>
</organism>
<feature type="chain" id="PRO_0000290437" description="Ethylene-responsive transcription factor-like protein At4g13040">
    <location>
        <begin position="1"/>
        <end position="226"/>
    </location>
</feature>
<feature type="DNA-binding region" description="AP2/ERF" evidence="2">
    <location>
        <begin position="105"/>
        <end position="171"/>
    </location>
</feature>
<feature type="region of interest" description="Disordered" evidence="3">
    <location>
        <begin position="63"/>
        <end position="109"/>
    </location>
</feature>
<feature type="region of interest" description="Disordered" evidence="3">
    <location>
        <begin position="195"/>
        <end position="226"/>
    </location>
</feature>
<feature type="compositionally biased region" description="Basic residues" evidence="3">
    <location>
        <begin position="97"/>
        <end position="109"/>
    </location>
</feature>
<feature type="compositionally biased region" description="Acidic residues" evidence="3">
    <location>
        <begin position="217"/>
        <end position="226"/>
    </location>
</feature>
<feature type="splice variant" id="VSP_026152" description="In isoform 2." evidence="4">
    <location>
        <begin position="1"/>
        <end position="56"/>
    </location>
</feature>
<feature type="splice variant" id="VSP_026153" description="In isoform 2." evidence="4">
    <original>VEKKAIEERSRRTRSKHMHFRSDYSDISPVNSDSISPKY</original>
    <variation>MPEQLIIPGQQKRLQRLSWRKRLLKKEAEELGQNICISD</variation>
    <location>
        <begin position="57"/>
        <end position="95"/>
    </location>
</feature>
<feature type="sequence conflict" description="In Ref. 1; BAD95239." evidence="4" ref="1">
    <original>S</original>
    <variation>T</variation>
    <location>
        <position position="180"/>
    </location>
</feature>
<name>ERFL1_ARATH</name>
<keyword id="KW-0010">Activator</keyword>
<keyword id="KW-0025">Alternative splicing</keyword>
<keyword id="KW-0238">DNA-binding</keyword>
<keyword id="KW-0936">Ethylene signaling pathway</keyword>
<keyword id="KW-0539">Nucleus</keyword>
<keyword id="KW-1185">Reference proteome</keyword>
<keyword id="KW-0804">Transcription</keyword>
<keyword id="KW-0805">Transcription regulation</keyword>
<comment type="function">
    <text evidence="1">Probably acts as a transcriptional activator. Binds to the GCC-box pathogenesis-related promoter element. May be involved in the regulation of gene expression by stress factors and by components of stress signal transduction pathways (By similarity).</text>
</comment>
<comment type="subcellular location">
    <subcellularLocation>
        <location evidence="4">Nucleus</location>
    </subcellularLocation>
</comment>
<comment type="alternative products">
    <event type="alternative splicing"/>
    <isoform>
        <id>Q56XP9-1</id>
        <name>1</name>
        <sequence type="displayed"/>
    </isoform>
    <isoform>
        <id>Q56XP9-2</id>
        <name>2</name>
        <sequence type="described" ref="VSP_026152 VSP_026153"/>
    </isoform>
</comment>
<comment type="similarity">
    <text evidence="4">Belongs to the AP2/ERF transcription factor family.</text>
</comment>
<comment type="sequence caution" evidence="4">
    <conflict type="erroneous gene model prediction">
        <sequence resource="EMBL-CDS" id="CAB45503"/>
    </conflict>
</comment>
<comment type="sequence caution" evidence="4">
    <conflict type="erroneous gene model prediction">
        <sequence resource="EMBL-CDS" id="CAB78346"/>
    </conflict>
</comment>
<sequence>MVSLRRRRLLGLCCGPNGYVTPLPFLTAEEMITGIPNPNARAAYNPGPAETVTTVIVEKKAIEERSRRTRSKHMHFRSDYSDISPVNSDSISPKYQPPKRRKQHRRKRVHNQEPCLMRGVYYKNMKWQAAIKVEKKQIHLGTFSSQEEAARLYDRAAFMCGREPNFELSEEVIRELKQQSWEEFLNCTRRTITNKKPKSRIEHEDTKINASMPHQPEEEEQDSDKM</sequence>
<evidence type="ECO:0000250" key="1"/>
<evidence type="ECO:0000255" key="2">
    <source>
        <dbReference type="PROSITE-ProRule" id="PRU00366"/>
    </source>
</evidence>
<evidence type="ECO:0000256" key="3">
    <source>
        <dbReference type="SAM" id="MobiDB-lite"/>
    </source>
</evidence>
<evidence type="ECO:0000305" key="4"/>
<reference key="1">
    <citation type="journal article" date="1999" name="Nature">
        <title>Sequence and analysis of chromosome 4 of the plant Arabidopsis thaliana.</title>
        <authorList>
            <person name="Mayer K.F.X."/>
            <person name="Schueller C."/>
            <person name="Wambutt R."/>
            <person name="Murphy G."/>
            <person name="Volckaert G."/>
            <person name="Pohl T."/>
            <person name="Duesterhoeft A."/>
            <person name="Stiekema W."/>
            <person name="Entian K.-D."/>
            <person name="Terryn N."/>
            <person name="Harris B."/>
            <person name="Ansorge W."/>
            <person name="Brandt P."/>
            <person name="Grivell L.A."/>
            <person name="Rieger M."/>
            <person name="Weichselgartner M."/>
            <person name="de Simone V."/>
            <person name="Obermaier B."/>
            <person name="Mache R."/>
            <person name="Mueller M."/>
            <person name="Kreis M."/>
            <person name="Delseny M."/>
            <person name="Puigdomenech P."/>
            <person name="Watson M."/>
            <person name="Schmidtheini T."/>
            <person name="Reichert B."/>
            <person name="Portetelle D."/>
            <person name="Perez-Alonso M."/>
            <person name="Boutry M."/>
            <person name="Bancroft I."/>
            <person name="Vos P."/>
            <person name="Hoheisel J."/>
            <person name="Zimmermann W."/>
            <person name="Wedler H."/>
            <person name="Ridley P."/>
            <person name="Langham S.-A."/>
            <person name="McCullagh B."/>
            <person name="Bilham L."/>
            <person name="Robben J."/>
            <person name="van der Schueren J."/>
            <person name="Grymonprez B."/>
            <person name="Chuang Y.-J."/>
            <person name="Vandenbussche F."/>
            <person name="Braeken M."/>
            <person name="Weltjens I."/>
            <person name="Voet M."/>
            <person name="Bastiaens I."/>
            <person name="Aert R."/>
            <person name="Defoor E."/>
            <person name="Weitzenegger T."/>
            <person name="Bothe G."/>
            <person name="Ramsperger U."/>
            <person name="Hilbert H."/>
            <person name="Braun M."/>
            <person name="Holzer E."/>
            <person name="Brandt A."/>
            <person name="Peters S."/>
            <person name="van Staveren M."/>
            <person name="Dirkse W."/>
            <person name="Mooijman P."/>
            <person name="Klein Lankhorst R."/>
            <person name="Rose M."/>
            <person name="Hauf J."/>
            <person name="Koetter P."/>
            <person name="Berneiser S."/>
            <person name="Hempel S."/>
            <person name="Feldpausch M."/>
            <person name="Lamberth S."/>
            <person name="Van den Daele H."/>
            <person name="De Keyser A."/>
            <person name="Buysshaert C."/>
            <person name="Gielen J."/>
            <person name="Villarroel R."/>
            <person name="De Clercq R."/>
            <person name="van Montagu M."/>
            <person name="Rogers J."/>
            <person name="Cronin A."/>
            <person name="Quail M.A."/>
            <person name="Bray-Allen S."/>
            <person name="Clark L."/>
            <person name="Doggett J."/>
            <person name="Hall S."/>
            <person name="Kay M."/>
            <person name="Lennard N."/>
            <person name="McLay K."/>
            <person name="Mayes R."/>
            <person name="Pettett A."/>
            <person name="Rajandream M.A."/>
            <person name="Lyne M."/>
            <person name="Benes V."/>
            <person name="Rechmann S."/>
            <person name="Borkova D."/>
            <person name="Bloecker H."/>
            <person name="Scharfe M."/>
            <person name="Grimm M."/>
            <person name="Loehnert T.-H."/>
            <person name="Dose S."/>
            <person name="de Haan M."/>
            <person name="Maarse A.C."/>
            <person name="Schaefer M."/>
            <person name="Mueller-Auer S."/>
            <person name="Gabel C."/>
            <person name="Fuchs M."/>
            <person name="Fartmann B."/>
            <person name="Granderath K."/>
            <person name="Dauner D."/>
            <person name="Herzl A."/>
            <person name="Neumann S."/>
            <person name="Argiriou A."/>
            <person name="Vitale D."/>
            <person name="Liguori R."/>
            <person name="Piravandi E."/>
            <person name="Massenet O."/>
            <person name="Quigley F."/>
            <person name="Clabauld G."/>
            <person name="Muendlein A."/>
            <person name="Felber R."/>
            <person name="Schnabl S."/>
            <person name="Hiller R."/>
            <person name="Schmidt W."/>
            <person name="Lecharny A."/>
            <person name="Aubourg S."/>
            <person name="Chefdor F."/>
            <person name="Cooke R."/>
            <person name="Berger C."/>
            <person name="Monfort A."/>
            <person name="Casacuberta E."/>
            <person name="Gibbons T."/>
            <person name="Weber N."/>
            <person name="Vandenbol M."/>
            <person name="Bargues M."/>
            <person name="Terol J."/>
            <person name="Torres A."/>
            <person name="Perez-Perez A."/>
            <person name="Purnelle B."/>
            <person name="Bent E."/>
            <person name="Johnson S."/>
            <person name="Tacon D."/>
            <person name="Jesse T."/>
            <person name="Heijnen L."/>
            <person name="Schwarz S."/>
            <person name="Scholler P."/>
            <person name="Heber S."/>
            <person name="Francs P."/>
            <person name="Bielke C."/>
            <person name="Frishman D."/>
            <person name="Haase D."/>
            <person name="Lemcke K."/>
            <person name="Mewes H.-W."/>
            <person name="Stocker S."/>
            <person name="Zaccaria P."/>
            <person name="Bevan M."/>
            <person name="Wilson R.K."/>
            <person name="de la Bastide M."/>
            <person name="Habermann K."/>
            <person name="Parnell L."/>
            <person name="Dedhia N."/>
            <person name="Gnoj L."/>
            <person name="Schutz K."/>
            <person name="Huang E."/>
            <person name="Spiegel L."/>
            <person name="Sekhon M."/>
            <person name="Murray J."/>
            <person name="Sheet P."/>
            <person name="Cordes M."/>
            <person name="Abu-Threideh J."/>
            <person name="Stoneking T."/>
            <person name="Kalicki J."/>
            <person name="Graves T."/>
            <person name="Harmon G."/>
            <person name="Edwards J."/>
            <person name="Latreille P."/>
            <person name="Courtney L."/>
            <person name="Cloud J."/>
            <person name="Abbott A."/>
            <person name="Scott K."/>
            <person name="Johnson D."/>
            <person name="Minx P."/>
            <person name="Bentley D."/>
            <person name="Fulton B."/>
            <person name="Miller N."/>
            <person name="Greco T."/>
            <person name="Kemp K."/>
            <person name="Kramer J."/>
            <person name="Fulton L."/>
            <person name="Mardis E."/>
            <person name="Dante M."/>
            <person name="Pepin K."/>
            <person name="Hillier L.W."/>
            <person name="Nelson J."/>
            <person name="Spieth J."/>
            <person name="Ryan E."/>
            <person name="Andrews S."/>
            <person name="Geisel C."/>
            <person name="Layman D."/>
            <person name="Du H."/>
            <person name="Ali J."/>
            <person name="Berghoff A."/>
            <person name="Jones K."/>
            <person name="Drone K."/>
            <person name="Cotton M."/>
            <person name="Joshu C."/>
            <person name="Antonoiu B."/>
            <person name="Zidanic M."/>
            <person name="Strong C."/>
            <person name="Sun H."/>
            <person name="Lamar B."/>
            <person name="Yordan C."/>
            <person name="Ma P."/>
            <person name="Zhong J."/>
            <person name="Preston R."/>
            <person name="Vil D."/>
            <person name="Shekher M."/>
            <person name="Matero A."/>
            <person name="Shah R."/>
            <person name="Swaby I.K."/>
            <person name="O'Shaughnessy A."/>
            <person name="Rodriguez M."/>
            <person name="Hoffman J."/>
            <person name="Till S."/>
            <person name="Granat S."/>
            <person name="Shohdy N."/>
            <person name="Hasegawa A."/>
            <person name="Hameed A."/>
            <person name="Lodhi M."/>
            <person name="Johnson A."/>
            <person name="Chen E."/>
            <person name="Marra M.A."/>
            <person name="Martienssen R."/>
            <person name="McCombie W.R."/>
        </authorList>
    </citation>
    <scope>NUCLEOTIDE SEQUENCE [LARGE SCALE GENOMIC DNA]</scope>
    <source>
        <strain>cv. Columbia</strain>
    </source>
</reference>
<reference key="2">
    <citation type="journal article" date="2017" name="Plant J.">
        <title>Araport11: a complete reannotation of the Arabidopsis thaliana reference genome.</title>
        <authorList>
            <person name="Cheng C.Y."/>
            <person name="Krishnakumar V."/>
            <person name="Chan A.P."/>
            <person name="Thibaud-Nissen F."/>
            <person name="Schobel S."/>
            <person name="Town C.D."/>
        </authorList>
    </citation>
    <scope>GENOME REANNOTATION</scope>
    <source>
        <strain>cv. Columbia</strain>
    </source>
</reference>
<reference key="3">
    <citation type="submission" date="2005-03" db="EMBL/GenBank/DDBJ databases">
        <title>Large-scale analysis of RIKEN Arabidopsis full-length (RAFL) cDNAs.</title>
        <authorList>
            <person name="Totoki Y."/>
            <person name="Seki M."/>
            <person name="Ishida J."/>
            <person name="Nakajima M."/>
            <person name="Enju A."/>
            <person name="Kamiya A."/>
            <person name="Narusaka M."/>
            <person name="Shin-i T."/>
            <person name="Nakagawa M."/>
            <person name="Sakamoto N."/>
            <person name="Oishi K."/>
            <person name="Kohara Y."/>
            <person name="Kobayashi M."/>
            <person name="Toyoda A."/>
            <person name="Sakaki Y."/>
            <person name="Sakurai T."/>
            <person name="Iida K."/>
            <person name="Akiyama K."/>
            <person name="Satou M."/>
            <person name="Toyoda T."/>
            <person name="Konagaya A."/>
            <person name="Carninci P."/>
            <person name="Kawai J."/>
            <person name="Hayashizaki Y."/>
            <person name="Shinozaki K."/>
        </authorList>
    </citation>
    <scope>NUCLEOTIDE SEQUENCE [LARGE SCALE MRNA] (ISOFORM 1)</scope>
    <source>
        <strain>cv. Columbia</strain>
    </source>
</reference>
<reference key="4">
    <citation type="journal article" date="2003" name="Science">
        <title>Empirical analysis of transcriptional activity in the Arabidopsis genome.</title>
        <authorList>
            <person name="Yamada K."/>
            <person name="Lim J."/>
            <person name="Dale J.M."/>
            <person name="Chen H."/>
            <person name="Shinn P."/>
            <person name="Palm C.J."/>
            <person name="Southwick A.M."/>
            <person name="Wu H.C."/>
            <person name="Kim C.J."/>
            <person name="Nguyen M."/>
            <person name="Pham P.K."/>
            <person name="Cheuk R.F."/>
            <person name="Karlin-Newmann G."/>
            <person name="Liu S.X."/>
            <person name="Lam B."/>
            <person name="Sakano H."/>
            <person name="Wu T."/>
            <person name="Yu G."/>
            <person name="Miranda M."/>
            <person name="Quach H.L."/>
            <person name="Tripp M."/>
            <person name="Chang C.H."/>
            <person name="Lee J.M."/>
            <person name="Toriumi M.J."/>
            <person name="Chan M.M."/>
            <person name="Tang C.C."/>
            <person name="Onodera C.S."/>
            <person name="Deng J.M."/>
            <person name="Akiyama K."/>
            <person name="Ansari Y."/>
            <person name="Arakawa T."/>
            <person name="Banh J."/>
            <person name="Banno F."/>
            <person name="Bowser L."/>
            <person name="Brooks S.Y."/>
            <person name="Carninci P."/>
            <person name="Chao Q."/>
            <person name="Choy N."/>
            <person name="Enju A."/>
            <person name="Goldsmith A.D."/>
            <person name="Gurjal M."/>
            <person name="Hansen N.F."/>
            <person name="Hayashizaki Y."/>
            <person name="Johnson-Hopson C."/>
            <person name="Hsuan V.W."/>
            <person name="Iida K."/>
            <person name="Karnes M."/>
            <person name="Khan S."/>
            <person name="Koesema E."/>
            <person name="Ishida J."/>
            <person name="Jiang P.X."/>
            <person name="Jones T."/>
            <person name="Kawai J."/>
            <person name="Kamiya A."/>
            <person name="Meyers C."/>
            <person name="Nakajima M."/>
            <person name="Narusaka M."/>
            <person name="Seki M."/>
            <person name="Sakurai T."/>
            <person name="Satou M."/>
            <person name="Tamse R."/>
            <person name="Vaysberg M."/>
            <person name="Wallender E.K."/>
            <person name="Wong C."/>
            <person name="Yamamura Y."/>
            <person name="Yuan S."/>
            <person name="Shinozaki K."/>
            <person name="Davis R.W."/>
            <person name="Theologis A."/>
            <person name="Ecker J.R."/>
        </authorList>
    </citation>
    <scope>NUCLEOTIDE SEQUENCE [LARGE SCALE MRNA] OF 31-226 (ISOFORM 1)</scope>
    <source>
        <strain>cv. Columbia</strain>
    </source>
</reference>
<reference key="5">
    <citation type="journal article" date="2006" name="Plant Physiol.">
        <title>Genome-wide analysis of the ERF gene family in Arabidopsis and rice.</title>
        <authorList>
            <person name="Nakano T."/>
            <person name="Suzuki K."/>
            <person name="Fujimura T."/>
            <person name="Shinshi H."/>
        </authorList>
    </citation>
    <scope>GENE FAMILY</scope>
    <scope>NOMENCLATURE</scope>
</reference>
<dbReference type="EMBL" id="AL079349">
    <property type="protein sequence ID" value="CAB45503.1"/>
    <property type="status" value="ALT_SEQ"/>
    <property type="molecule type" value="Genomic_DNA"/>
</dbReference>
<dbReference type="EMBL" id="AL161535">
    <property type="protein sequence ID" value="CAB78346.1"/>
    <property type="status" value="ALT_SEQ"/>
    <property type="molecule type" value="Genomic_DNA"/>
</dbReference>
<dbReference type="EMBL" id="CP002687">
    <property type="protein sequence ID" value="AEE83221.1"/>
    <property type="molecule type" value="Genomic_DNA"/>
</dbReference>
<dbReference type="EMBL" id="CP002687">
    <property type="protein sequence ID" value="AEE83222.1"/>
    <property type="molecule type" value="Genomic_DNA"/>
</dbReference>
<dbReference type="EMBL" id="CP002687">
    <property type="protein sequence ID" value="ANM67421.1"/>
    <property type="molecule type" value="Genomic_DNA"/>
</dbReference>
<dbReference type="EMBL" id="AK221624">
    <property type="protein sequence ID" value="BAD95239.1"/>
    <property type="molecule type" value="mRNA"/>
</dbReference>
<dbReference type="EMBL" id="AY133690">
    <property type="protein sequence ID" value="AAM91624.1"/>
    <property type="molecule type" value="mRNA"/>
</dbReference>
<dbReference type="PIR" id="T10206">
    <property type="entry name" value="T10206"/>
</dbReference>
<dbReference type="RefSeq" id="NP_001078381.1">
    <molecule id="Q56XP9-2"/>
    <property type="nucleotide sequence ID" value="NM_001084912.2"/>
</dbReference>
<dbReference type="RefSeq" id="NP_001329251.1">
    <property type="nucleotide sequence ID" value="NM_001340827.1"/>
</dbReference>
<dbReference type="RefSeq" id="NP_001329253.1">
    <molecule id="Q56XP9-2"/>
    <property type="nucleotide sequence ID" value="NM_001340829.1"/>
</dbReference>
<dbReference type="RefSeq" id="NP_001329254.1">
    <property type="nucleotide sequence ID" value="NM_001340831.1"/>
</dbReference>
<dbReference type="RefSeq" id="NP_193040.2">
    <molecule id="Q56XP9-1"/>
    <property type="nucleotide sequence ID" value="NM_117373.5"/>
</dbReference>
<dbReference type="SMR" id="Q56XP9"/>
<dbReference type="BioGRID" id="12215">
    <property type="interactions" value="4"/>
</dbReference>
<dbReference type="FunCoup" id="Q56XP9">
    <property type="interactions" value="263"/>
</dbReference>
<dbReference type="IntAct" id="Q56XP9">
    <property type="interactions" value="2"/>
</dbReference>
<dbReference type="STRING" id="3702.Q56XP9"/>
<dbReference type="iPTMnet" id="Q56XP9"/>
<dbReference type="PaxDb" id="3702-AT4G13040.3"/>
<dbReference type="ProteomicsDB" id="220570">
    <molecule id="Q56XP9-1"/>
</dbReference>
<dbReference type="EnsemblPlants" id="AT4G13040.1">
    <molecule id="Q56XP9-1"/>
    <property type="protein sequence ID" value="AT4G13040.1"/>
    <property type="gene ID" value="AT4G13040"/>
</dbReference>
<dbReference type="EnsemblPlants" id="AT4G13040.2">
    <molecule id="Q56XP9-2"/>
    <property type="protein sequence ID" value="AT4G13040.2"/>
    <property type="gene ID" value="AT4G13040"/>
</dbReference>
<dbReference type="EnsemblPlants" id="AT4G13040.6">
    <molecule id="Q56XP9-2"/>
    <property type="protein sequence ID" value="AT4G13040.6"/>
    <property type="gene ID" value="AT4G13040"/>
</dbReference>
<dbReference type="GeneID" id="826918"/>
<dbReference type="Gramene" id="AT4G13040.1">
    <molecule id="Q56XP9-1"/>
    <property type="protein sequence ID" value="AT4G13040.1"/>
    <property type="gene ID" value="AT4G13040"/>
</dbReference>
<dbReference type="Gramene" id="AT4G13040.2">
    <molecule id="Q56XP9-2"/>
    <property type="protein sequence ID" value="AT4G13040.2"/>
    <property type="gene ID" value="AT4G13040"/>
</dbReference>
<dbReference type="Gramene" id="AT4G13040.6">
    <molecule id="Q56XP9-2"/>
    <property type="protein sequence ID" value="AT4G13040.6"/>
    <property type="gene ID" value="AT4G13040"/>
</dbReference>
<dbReference type="KEGG" id="ath:AT4G13040"/>
<dbReference type="Araport" id="AT4G13040"/>
<dbReference type="TAIR" id="AT4G13040">
    <property type="gene designation" value="APD1"/>
</dbReference>
<dbReference type="eggNOG" id="ENOG502QV4T">
    <property type="taxonomic scope" value="Eukaryota"/>
</dbReference>
<dbReference type="HOGENOM" id="CLU_088368_0_0_1"/>
<dbReference type="InParanoid" id="Q56XP9"/>
<dbReference type="OMA" id="RQFKWDD"/>
<dbReference type="OrthoDB" id="568096at2759"/>
<dbReference type="PhylomeDB" id="Q56XP9"/>
<dbReference type="PRO" id="PR:Q56XP9"/>
<dbReference type="Proteomes" id="UP000006548">
    <property type="component" value="Chromosome 4"/>
</dbReference>
<dbReference type="ExpressionAtlas" id="Q56XP9">
    <property type="expression patterns" value="baseline and differential"/>
</dbReference>
<dbReference type="GO" id="GO:0005634">
    <property type="term" value="C:nucleus"/>
    <property type="evidence" value="ECO:0007669"/>
    <property type="project" value="UniProtKB-SubCell"/>
</dbReference>
<dbReference type="GO" id="GO:0003677">
    <property type="term" value="F:DNA binding"/>
    <property type="evidence" value="ECO:0007669"/>
    <property type="project" value="UniProtKB-KW"/>
</dbReference>
<dbReference type="GO" id="GO:0003700">
    <property type="term" value="F:DNA-binding transcription factor activity"/>
    <property type="evidence" value="ECO:0007669"/>
    <property type="project" value="InterPro"/>
</dbReference>
<dbReference type="GO" id="GO:0009873">
    <property type="term" value="P:ethylene-activated signaling pathway"/>
    <property type="evidence" value="ECO:0007669"/>
    <property type="project" value="UniProtKB-KW"/>
</dbReference>
<dbReference type="CDD" id="cd00018">
    <property type="entry name" value="AP2"/>
    <property type="match status" value="1"/>
</dbReference>
<dbReference type="Gene3D" id="3.30.730.10">
    <property type="entry name" value="AP2/ERF domain"/>
    <property type="match status" value="1"/>
</dbReference>
<dbReference type="InterPro" id="IPR001471">
    <property type="entry name" value="AP2/ERF_dom"/>
</dbReference>
<dbReference type="InterPro" id="IPR036955">
    <property type="entry name" value="AP2/ERF_dom_sf"/>
</dbReference>
<dbReference type="InterPro" id="IPR016177">
    <property type="entry name" value="DNA-bd_dom_sf"/>
</dbReference>
<dbReference type="PANTHER" id="PTHR32467">
    <property type="entry name" value="AP2-LIKE ETHYLENE-RESPONSIVE TRANSCRIPTION FACTOR"/>
    <property type="match status" value="1"/>
</dbReference>
<dbReference type="PANTHER" id="PTHR32467:SF4">
    <property type="entry name" value="OS02G0499000 PROTEIN"/>
    <property type="match status" value="1"/>
</dbReference>
<dbReference type="SMART" id="SM00380">
    <property type="entry name" value="AP2"/>
    <property type="match status" value="1"/>
</dbReference>
<dbReference type="SUPFAM" id="SSF54171">
    <property type="entry name" value="DNA-binding domain"/>
    <property type="match status" value="1"/>
</dbReference>
<dbReference type="PROSITE" id="PS51032">
    <property type="entry name" value="AP2_ERF"/>
    <property type="match status" value="1"/>
</dbReference>
<proteinExistence type="evidence at transcript level"/>
<gene>
    <name type="ordered locus">At4g13040</name>
    <name type="ORF">F25G13.130</name>
</gene>
<protein>
    <recommendedName>
        <fullName>Ethylene-responsive transcription factor-like protein At4g13040</fullName>
    </recommendedName>
</protein>